<proteinExistence type="inferred from homology"/>
<reference key="1">
    <citation type="journal article" date="2009" name="PLoS ONE">
        <title>Non mycobacterial virulence genes in the genome of the emerging pathogen Mycobacterium abscessus.</title>
        <authorList>
            <person name="Ripoll F."/>
            <person name="Pasek S."/>
            <person name="Schenowitz C."/>
            <person name="Dossat C."/>
            <person name="Barbe V."/>
            <person name="Rottman M."/>
            <person name="Macheras E."/>
            <person name="Heym B."/>
            <person name="Herrmann J.L."/>
            <person name="Daffe M."/>
            <person name="Brosch R."/>
            <person name="Risler J.L."/>
            <person name="Gaillard J.L."/>
        </authorList>
    </citation>
    <scope>NUCLEOTIDE SEQUENCE [LARGE SCALE GENOMIC DNA]</scope>
    <source>
        <strain>ATCC 19977 / DSM 44196 / CCUG 20993 / CIP 104536 / JCM 13569 / NCTC 13031 / TMC 1543 / L948</strain>
    </source>
</reference>
<gene>
    <name evidence="1" type="primary">def</name>
    <name type="ordered locus">MAB_4187</name>
</gene>
<name>DEF_MYCA9</name>
<dbReference type="EC" id="3.5.1.88" evidence="1"/>
<dbReference type="EMBL" id="CU458896">
    <property type="protein sequence ID" value="CAM64260.1"/>
    <property type="molecule type" value="Genomic_DNA"/>
</dbReference>
<dbReference type="RefSeq" id="WP_005062317.1">
    <property type="nucleotide sequence ID" value="NZ_MLCG01000001.1"/>
</dbReference>
<dbReference type="SMR" id="B1MIN9"/>
<dbReference type="GeneID" id="93381132"/>
<dbReference type="KEGG" id="mab:MAB_4187"/>
<dbReference type="Proteomes" id="UP000007137">
    <property type="component" value="Chromosome"/>
</dbReference>
<dbReference type="GO" id="GO:0046872">
    <property type="term" value="F:metal ion binding"/>
    <property type="evidence" value="ECO:0007669"/>
    <property type="project" value="UniProtKB-KW"/>
</dbReference>
<dbReference type="GO" id="GO:0042586">
    <property type="term" value="F:peptide deformylase activity"/>
    <property type="evidence" value="ECO:0007669"/>
    <property type="project" value="UniProtKB-UniRule"/>
</dbReference>
<dbReference type="GO" id="GO:0043686">
    <property type="term" value="P:co-translational protein modification"/>
    <property type="evidence" value="ECO:0007669"/>
    <property type="project" value="TreeGrafter"/>
</dbReference>
<dbReference type="GO" id="GO:0006412">
    <property type="term" value="P:translation"/>
    <property type="evidence" value="ECO:0007669"/>
    <property type="project" value="UniProtKB-UniRule"/>
</dbReference>
<dbReference type="CDD" id="cd00487">
    <property type="entry name" value="Pep_deformylase"/>
    <property type="match status" value="1"/>
</dbReference>
<dbReference type="Gene3D" id="3.90.45.10">
    <property type="entry name" value="Peptide deformylase"/>
    <property type="match status" value="1"/>
</dbReference>
<dbReference type="HAMAP" id="MF_00163">
    <property type="entry name" value="Pep_deformylase"/>
    <property type="match status" value="1"/>
</dbReference>
<dbReference type="InterPro" id="IPR023635">
    <property type="entry name" value="Peptide_deformylase"/>
</dbReference>
<dbReference type="InterPro" id="IPR036821">
    <property type="entry name" value="Peptide_deformylase_sf"/>
</dbReference>
<dbReference type="NCBIfam" id="TIGR00079">
    <property type="entry name" value="pept_deformyl"/>
    <property type="match status" value="1"/>
</dbReference>
<dbReference type="NCBIfam" id="NF001159">
    <property type="entry name" value="PRK00150.1-3"/>
    <property type="match status" value="1"/>
</dbReference>
<dbReference type="NCBIfam" id="NF009483">
    <property type="entry name" value="PRK12846.1-4"/>
    <property type="match status" value="1"/>
</dbReference>
<dbReference type="PANTHER" id="PTHR10458">
    <property type="entry name" value="PEPTIDE DEFORMYLASE"/>
    <property type="match status" value="1"/>
</dbReference>
<dbReference type="PANTHER" id="PTHR10458:SF2">
    <property type="entry name" value="PEPTIDE DEFORMYLASE, MITOCHONDRIAL"/>
    <property type="match status" value="1"/>
</dbReference>
<dbReference type="Pfam" id="PF01327">
    <property type="entry name" value="Pep_deformylase"/>
    <property type="match status" value="1"/>
</dbReference>
<dbReference type="PIRSF" id="PIRSF004749">
    <property type="entry name" value="Pep_def"/>
    <property type="match status" value="1"/>
</dbReference>
<dbReference type="PRINTS" id="PR01576">
    <property type="entry name" value="PDEFORMYLASE"/>
</dbReference>
<dbReference type="SUPFAM" id="SSF56420">
    <property type="entry name" value="Peptide deformylase"/>
    <property type="match status" value="1"/>
</dbReference>
<organism>
    <name type="scientific">Mycobacteroides abscessus (strain ATCC 19977 / DSM 44196 / CCUG 20993 / CIP 104536 / JCM 13569 / NCTC 13031 / TMC 1543 / L948)</name>
    <name type="common">Mycobacterium abscessus</name>
    <dbReference type="NCBI Taxonomy" id="561007"/>
    <lineage>
        <taxon>Bacteria</taxon>
        <taxon>Bacillati</taxon>
        <taxon>Actinomycetota</taxon>
        <taxon>Actinomycetes</taxon>
        <taxon>Mycobacteriales</taxon>
        <taxon>Mycobacteriaceae</taxon>
        <taxon>Mycobacteroides</taxon>
        <taxon>Mycobacteroides abscessus</taxon>
    </lineage>
</organism>
<sequence length="197" mass="20958">MAIVPIRIVGDPVLHTPTQPVPVGPDGSLPDDLPELIANMYETMDAANGVGLAANQIGVPLRLFVYDCAETRGGGTRHRGVVINPVLETSEIPETMPDPDDDEEGCLSVPGESFPTGRAGWARVTGLDADGKEVTLEGNDLFARMLQHETGHLDGFLYIDKLIGRNARAAKRAVKSNGWGVPGLSWTPGQVADPFGH</sequence>
<keyword id="KW-0378">Hydrolase</keyword>
<keyword id="KW-0408">Iron</keyword>
<keyword id="KW-0479">Metal-binding</keyword>
<keyword id="KW-0648">Protein biosynthesis</keyword>
<keyword id="KW-1185">Reference proteome</keyword>
<comment type="function">
    <text evidence="1">Removes the formyl group from the N-terminal Met of newly synthesized proteins. Requires at least a dipeptide for an efficient rate of reaction. N-terminal L-methionine is a prerequisite for activity but the enzyme has broad specificity at other positions.</text>
</comment>
<comment type="catalytic activity">
    <reaction evidence="1">
        <text>N-terminal N-formyl-L-methionyl-[peptide] + H2O = N-terminal L-methionyl-[peptide] + formate</text>
        <dbReference type="Rhea" id="RHEA:24420"/>
        <dbReference type="Rhea" id="RHEA-COMP:10639"/>
        <dbReference type="Rhea" id="RHEA-COMP:10640"/>
        <dbReference type="ChEBI" id="CHEBI:15377"/>
        <dbReference type="ChEBI" id="CHEBI:15740"/>
        <dbReference type="ChEBI" id="CHEBI:49298"/>
        <dbReference type="ChEBI" id="CHEBI:64731"/>
        <dbReference type="EC" id="3.5.1.88"/>
    </reaction>
</comment>
<comment type="cofactor">
    <cofactor evidence="1">
        <name>Fe(2+)</name>
        <dbReference type="ChEBI" id="CHEBI:29033"/>
    </cofactor>
    <text evidence="1">Binds 1 Fe(2+) ion.</text>
</comment>
<comment type="similarity">
    <text evidence="1">Belongs to the polypeptide deformylase family.</text>
</comment>
<evidence type="ECO:0000255" key="1">
    <source>
        <dbReference type="HAMAP-Rule" id="MF_00163"/>
    </source>
</evidence>
<protein>
    <recommendedName>
        <fullName evidence="1">Peptide deformylase</fullName>
        <shortName evidence="1">PDF</shortName>
        <ecNumber evidence="1">3.5.1.88</ecNumber>
    </recommendedName>
    <alternativeName>
        <fullName evidence="1">Polypeptide deformylase</fullName>
    </alternativeName>
</protein>
<feature type="chain" id="PRO_1000097324" description="Peptide deformylase">
    <location>
        <begin position="1"/>
        <end position="197"/>
    </location>
</feature>
<feature type="active site" evidence="1">
    <location>
        <position position="149"/>
    </location>
</feature>
<feature type="binding site" evidence="1">
    <location>
        <position position="106"/>
    </location>
    <ligand>
        <name>Fe cation</name>
        <dbReference type="ChEBI" id="CHEBI:24875"/>
    </ligand>
</feature>
<feature type="binding site" evidence="1">
    <location>
        <position position="148"/>
    </location>
    <ligand>
        <name>Fe cation</name>
        <dbReference type="ChEBI" id="CHEBI:24875"/>
    </ligand>
</feature>
<feature type="binding site" evidence="1">
    <location>
        <position position="152"/>
    </location>
    <ligand>
        <name>Fe cation</name>
        <dbReference type="ChEBI" id="CHEBI:24875"/>
    </ligand>
</feature>
<accession>B1MIN9</accession>